<evidence type="ECO:0000255" key="1">
    <source>
        <dbReference type="HAMAP-Rule" id="MF_00090"/>
    </source>
</evidence>
<keyword id="KW-0963">Cytoplasm</keyword>
<keyword id="KW-0489">Methyltransferase</keyword>
<keyword id="KW-0949">S-adenosyl-L-methionine</keyword>
<keyword id="KW-0808">Transferase</keyword>
<reference key="1">
    <citation type="journal article" date="2007" name="Environ. Microbiol.">
        <title>Whole-genome analysis of the ammonia-oxidizing bacterium, Nitrosomonas eutropha C91: implications for niche adaptation.</title>
        <authorList>
            <person name="Stein L.Y."/>
            <person name="Arp D.J."/>
            <person name="Berube P.M."/>
            <person name="Chain P.S."/>
            <person name="Hauser L."/>
            <person name="Jetten M.S."/>
            <person name="Klotz M.G."/>
            <person name="Larimer F.W."/>
            <person name="Norton J.M."/>
            <person name="Op den Camp H.J.M."/>
            <person name="Shin M."/>
            <person name="Wei X."/>
        </authorList>
    </citation>
    <scope>NUCLEOTIDE SEQUENCE [LARGE SCALE GENOMIC DNA]</scope>
    <source>
        <strain>DSM 101675 / C91 / Nm57</strain>
    </source>
</reference>
<sequence length="222" mass="24732">MSVRHSGIGMTSPRTRVRMVERLREQGVRDEVVLAAMGSIPRHLFVEEALASRAYEDVALPINYGQTISSPWIVGRMSELLRNGGNNSLRKVLEIGTGCGYQTAVLAKIANEVYSIERIGPLLTRTRIRLRELGIRNIYLKHADGMRGLLEAGPFDGIMMTAVIPEIPETLLEQLAMGGRMVFPKGNRQQYLCVIDHTTEGFVETILDEVMFVPILPGTINR</sequence>
<accession>Q0ADP2</accession>
<organism>
    <name type="scientific">Nitrosomonas eutropha (strain DSM 101675 / C91 / Nm57)</name>
    <dbReference type="NCBI Taxonomy" id="335283"/>
    <lineage>
        <taxon>Bacteria</taxon>
        <taxon>Pseudomonadati</taxon>
        <taxon>Pseudomonadota</taxon>
        <taxon>Betaproteobacteria</taxon>
        <taxon>Nitrosomonadales</taxon>
        <taxon>Nitrosomonadaceae</taxon>
        <taxon>Nitrosomonas</taxon>
    </lineage>
</organism>
<feature type="chain" id="PRO_0000351888" description="Protein-L-isoaspartate O-methyltransferase">
    <location>
        <begin position="1"/>
        <end position="222"/>
    </location>
</feature>
<feature type="active site" evidence="1">
    <location>
        <position position="69"/>
    </location>
</feature>
<gene>
    <name evidence="1" type="primary">pcm</name>
    <name type="ordered locus">Neut_2323</name>
</gene>
<protein>
    <recommendedName>
        <fullName evidence="1">Protein-L-isoaspartate O-methyltransferase</fullName>
        <ecNumber evidence="1">2.1.1.77</ecNumber>
    </recommendedName>
    <alternativeName>
        <fullName evidence="1">L-isoaspartyl protein carboxyl methyltransferase</fullName>
    </alternativeName>
    <alternativeName>
        <fullName evidence="1">Protein L-isoaspartyl methyltransferase</fullName>
    </alternativeName>
    <alternativeName>
        <fullName evidence="1">Protein-beta-aspartate methyltransferase</fullName>
        <shortName evidence="1">PIMT</shortName>
    </alternativeName>
</protein>
<proteinExistence type="inferred from homology"/>
<dbReference type="EC" id="2.1.1.77" evidence="1"/>
<dbReference type="EMBL" id="CP000450">
    <property type="protein sequence ID" value="ABI60540.1"/>
    <property type="molecule type" value="Genomic_DNA"/>
</dbReference>
<dbReference type="RefSeq" id="WP_011635313.1">
    <property type="nucleotide sequence ID" value="NC_008344.1"/>
</dbReference>
<dbReference type="SMR" id="Q0ADP2"/>
<dbReference type="STRING" id="335283.Neut_2323"/>
<dbReference type="KEGG" id="net:Neut_2323"/>
<dbReference type="eggNOG" id="COG2518">
    <property type="taxonomic scope" value="Bacteria"/>
</dbReference>
<dbReference type="HOGENOM" id="CLU_055432_2_0_4"/>
<dbReference type="OrthoDB" id="9810066at2"/>
<dbReference type="Proteomes" id="UP000001966">
    <property type="component" value="Chromosome"/>
</dbReference>
<dbReference type="GO" id="GO:0005737">
    <property type="term" value="C:cytoplasm"/>
    <property type="evidence" value="ECO:0007669"/>
    <property type="project" value="UniProtKB-SubCell"/>
</dbReference>
<dbReference type="GO" id="GO:0004719">
    <property type="term" value="F:protein-L-isoaspartate (D-aspartate) O-methyltransferase activity"/>
    <property type="evidence" value="ECO:0007669"/>
    <property type="project" value="UniProtKB-UniRule"/>
</dbReference>
<dbReference type="GO" id="GO:0032259">
    <property type="term" value="P:methylation"/>
    <property type="evidence" value="ECO:0007669"/>
    <property type="project" value="UniProtKB-KW"/>
</dbReference>
<dbReference type="GO" id="GO:0036211">
    <property type="term" value="P:protein modification process"/>
    <property type="evidence" value="ECO:0007669"/>
    <property type="project" value="UniProtKB-UniRule"/>
</dbReference>
<dbReference type="GO" id="GO:0030091">
    <property type="term" value="P:protein repair"/>
    <property type="evidence" value="ECO:0007669"/>
    <property type="project" value="UniProtKB-UniRule"/>
</dbReference>
<dbReference type="CDD" id="cd02440">
    <property type="entry name" value="AdoMet_MTases"/>
    <property type="match status" value="1"/>
</dbReference>
<dbReference type="FunFam" id="3.40.50.150:FF:000010">
    <property type="entry name" value="Protein-L-isoaspartate O-methyltransferase"/>
    <property type="match status" value="1"/>
</dbReference>
<dbReference type="Gene3D" id="3.40.50.150">
    <property type="entry name" value="Vaccinia Virus protein VP39"/>
    <property type="match status" value="1"/>
</dbReference>
<dbReference type="HAMAP" id="MF_00090">
    <property type="entry name" value="PIMT"/>
    <property type="match status" value="1"/>
</dbReference>
<dbReference type="InterPro" id="IPR000682">
    <property type="entry name" value="PCMT"/>
</dbReference>
<dbReference type="InterPro" id="IPR029063">
    <property type="entry name" value="SAM-dependent_MTases_sf"/>
</dbReference>
<dbReference type="NCBIfam" id="TIGR00080">
    <property type="entry name" value="pimt"/>
    <property type="match status" value="1"/>
</dbReference>
<dbReference type="NCBIfam" id="NF001453">
    <property type="entry name" value="PRK00312.1"/>
    <property type="match status" value="1"/>
</dbReference>
<dbReference type="PANTHER" id="PTHR11579">
    <property type="entry name" value="PROTEIN-L-ISOASPARTATE O-METHYLTRANSFERASE"/>
    <property type="match status" value="1"/>
</dbReference>
<dbReference type="PANTHER" id="PTHR11579:SF0">
    <property type="entry name" value="PROTEIN-L-ISOASPARTATE(D-ASPARTATE) O-METHYLTRANSFERASE"/>
    <property type="match status" value="1"/>
</dbReference>
<dbReference type="Pfam" id="PF01135">
    <property type="entry name" value="PCMT"/>
    <property type="match status" value="1"/>
</dbReference>
<dbReference type="SUPFAM" id="SSF53335">
    <property type="entry name" value="S-adenosyl-L-methionine-dependent methyltransferases"/>
    <property type="match status" value="1"/>
</dbReference>
<dbReference type="PROSITE" id="PS01279">
    <property type="entry name" value="PCMT"/>
    <property type="match status" value="1"/>
</dbReference>
<name>PIMT_NITEC</name>
<comment type="function">
    <text evidence="1">Catalyzes the methyl esterification of L-isoaspartyl residues in peptides and proteins that result from spontaneous decomposition of normal L-aspartyl and L-asparaginyl residues. It plays a role in the repair and/or degradation of damaged proteins.</text>
</comment>
<comment type="catalytic activity">
    <reaction evidence="1">
        <text>[protein]-L-isoaspartate + S-adenosyl-L-methionine = [protein]-L-isoaspartate alpha-methyl ester + S-adenosyl-L-homocysteine</text>
        <dbReference type="Rhea" id="RHEA:12705"/>
        <dbReference type="Rhea" id="RHEA-COMP:12143"/>
        <dbReference type="Rhea" id="RHEA-COMP:12144"/>
        <dbReference type="ChEBI" id="CHEBI:57856"/>
        <dbReference type="ChEBI" id="CHEBI:59789"/>
        <dbReference type="ChEBI" id="CHEBI:90596"/>
        <dbReference type="ChEBI" id="CHEBI:90598"/>
        <dbReference type="EC" id="2.1.1.77"/>
    </reaction>
</comment>
<comment type="subcellular location">
    <subcellularLocation>
        <location evidence="1">Cytoplasm</location>
    </subcellularLocation>
</comment>
<comment type="similarity">
    <text evidence="1">Belongs to the methyltransferase superfamily. L-isoaspartyl/D-aspartyl protein methyltransferase family.</text>
</comment>